<dbReference type="EMBL" id="AB032945">
    <property type="protein sequence ID" value="BAA86433.2"/>
    <property type="status" value="ALT_INIT"/>
    <property type="molecule type" value="mRNA"/>
</dbReference>
<dbReference type="EMBL" id="AK025336">
    <property type="protein sequence ID" value="BAB15114.1"/>
    <property type="molecule type" value="mRNA"/>
</dbReference>
<dbReference type="EMBL" id="AB290160">
    <property type="protein sequence ID" value="BAG06714.1"/>
    <property type="molecule type" value="mRNA"/>
</dbReference>
<dbReference type="EMBL" id="AC090227">
    <property type="status" value="NOT_ANNOTATED_CDS"/>
    <property type="molecule type" value="Genomic_DNA"/>
</dbReference>
<dbReference type="EMBL" id="AC091044">
    <property type="status" value="NOT_ANNOTATED_CDS"/>
    <property type="molecule type" value="Genomic_DNA"/>
</dbReference>
<dbReference type="EMBL" id="AC092705">
    <property type="status" value="NOT_ANNOTATED_CDS"/>
    <property type="molecule type" value="Genomic_DNA"/>
</dbReference>
<dbReference type="EMBL" id="AC105224">
    <property type="status" value="NOT_ANNOTATED_CDS"/>
    <property type="molecule type" value="Genomic_DNA"/>
</dbReference>
<dbReference type="EMBL" id="BC033527">
    <property type="protein sequence ID" value="AAH33527.1"/>
    <property type="molecule type" value="mRNA"/>
</dbReference>
<dbReference type="CCDS" id="CCDS42436.1">
    <molecule id="Q9ULV0-1"/>
</dbReference>
<dbReference type="RefSeq" id="NP_001073936.1">
    <molecule id="Q9ULV0-1"/>
    <property type="nucleotide sequence ID" value="NM_001080467.3"/>
</dbReference>
<dbReference type="PDB" id="4J5M">
    <property type="method" value="X-ray"/>
    <property type="resolution" value="2.07 A"/>
    <property type="chains" value="A=1453-1848"/>
</dbReference>
<dbReference type="PDB" id="4LNZ">
    <property type="method" value="X-ray"/>
    <property type="resolution" value="3.11 A"/>
    <property type="chains" value="A=1460-1848"/>
</dbReference>
<dbReference type="PDB" id="4LWZ">
    <property type="method" value="X-ray"/>
    <property type="resolution" value="2.55 A"/>
    <property type="chains" value="B/D=1456-1848"/>
</dbReference>
<dbReference type="PDB" id="4LX0">
    <property type="method" value="X-ray"/>
    <property type="resolution" value="2.19 A"/>
    <property type="chains" value="B/D=1456-1848"/>
</dbReference>
<dbReference type="PDBsum" id="4J5M"/>
<dbReference type="PDBsum" id="4LNZ"/>
<dbReference type="PDBsum" id="4LWZ"/>
<dbReference type="PDBsum" id="4LX0"/>
<dbReference type="SMR" id="Q9ULV0"/>
<dbReference type="BioGRID" id="110729">
    <property type="interactions" value="116"/>
</dbReference>
<dbReference type="CORUM" id="Q9ULV0"/>
<dbReference type="FunCoup" id="Q9ULV0">
    <property type="interactions" value="1031"/>
</dbReference>
<dbReference type="IntAct" id="Q9ULV0">
    <property type="interactions" value="78"/>
</dbReference>
<dbReference type="MINT" id="Q9ULV0"/>
<dbReference type="STRING" id="9606.ENSP00000285039"/>
<dbReference type="GlyGen" id="Q9ULV0">
    <property type="glycosylation" value="1 site, 1 O-linked glycan (1 site)"/>
</dbReference>
<dbReference type="iPTMnet" id="Q9ULV0"/>
<dbReference type="PhosphoSitePlus" id="Q9ULV0"/>
<dbReference type="SwissPalm" id="Q9ULV0"/>
<dbReference type="BioMuta" id="MYO5B"/>
<dbReference type="DMDM" id="296439293"/>
<dbReference type="jPOST" id="Q9ULV0"/>
<dbReference type="MassIVE" id="Q9ULV0"/>
<dbReference type="PaxDb" id="9606-ENSP00000285039"/>
<dbReference type="PeptideAtlas" id="Q9ULV0"/>
<dbReference type="ProteomicsDB" id="81062"/>
<dbReference type="ProteomicsDB" id="85128">
    <molecule id="Q9ULV0-1"/>
</dbReference>
<dbReference type="Pumba" id="Q9ULV0"/>
<dbReference type="Antibodypedia" id="49571">
    <property type="antibodies" value="95 antibodies from 25 providers"/>
</dbReference>
<dbReference type="DNASU" id="4645"/>
<dbReference type="Ensembl" id="ENST00000285039.12">
    <molecule id="Q9ULV0-1"/>
    <property type="protein sequence ID" value="ENSP00000285039.6"/>
    <property type="gene ID" value="ENSG00000167306.21"/>
</dbReference>
<dbReference type="Ensembl" id="ENST00000592688.1">
    <molecule id="Q9ULV0-3"/>
    <property type="protein sequence ID" value="ENSP00000466368.1"/>
    <property type="gene ID" value="ENSG00000167306.21"/>
</dbReference>
<dbReference type="GeneID" id="4645"/>
<dbReference type="KEGG" id="hsa:4645"/>
<dbReference type="MANE-Select" id="ENST00000285039.12">
    <property type="protein sequence ID" value="ENSP00000285039.6"/>
    <property type="RefSeq nucleotide sequence ID" value="NM_001080467.3"/>
    <property type="RefSeq protein sequence ID" value="NP_001073936.1"/>
</dbReference>
<dbReference type="UCSC" id="uc002ldz.4">
    <molecule id="Q9ULV0-1"/>
    <property type="organism name" value="human"/>
</dbReference>
<dbReference type="AGR" id="HGNC:7603"/>
<dbReference type="CTD" id="4645"/>
<dbReference type="DisGeNET" id="4645"/>
<dbReference type="GeneCards" id="MYO5B"/>
<dbReference type="HGNC" id="HGNC:7603">
    <property type="gene designation" value="MYO5B"/>
</dbReference>
<dbReference type="HPA" id="ENSG00000167306">
    <property type="expression patterns" value="Tissue enhanced (intestine)"/>
</dbReference>
<dbReference type="MalaCards" id="MYO5B"/>
<dbReference type="MIM" id="251850">
    <property type="type" value="phenotype"/>
</dbReference>
<dbReference type="MIM" id="606540">
    <property type="type" value="gene"/>
</dbReference>
<dbReference type="MIM" id="619868">
    <property type="type" value="phenotype"/>
</dbReference>
<dbReference type="neXtProt" id="NX_Q9ULV0"/>
<dbReference type="OpenTargets" id="ENSG00000167306"/>
<dbReference type="Orphanet" id="2290">
    <property type="disease" value="Microvillus inclusion disease"/>
</dbReference>
<dbReference type="Orphanet" id="480491">
    <property type="disease" value="MYO5B-related progressive familial intrahepatic cholestasis"/>
</dbReference>
<dbReference type="Orphanet" id="79306">
    <property type="disease" value="Progressive familial intrahepatic cholestasis type 1"/>
</dbReference>
<dbReference type="PharmGKB" id="PA31408"/>
<dbReference type="VEuPathDB" id="HostDB:ENSG00000167306"/>
<dbReference type="eggNOG" id="KOG0160">
    <property type="taxonomic scope" value="Eukaryota"/>
</dbReference>
<dbReference type="GeneTree" id="ENSGT00940000155402"/>
<dbReference type="HOGENOM" id="CLU_000192_9_1_1"/>
<dbReference type="InParanoid" id="Q9ULV0"/>
<dbReference type="OMA" id="KVQDLEX"/>
<dbReference type="OrthoDB" id="6108017at2759"/>
<dbReference type="PAN-GO" id="Q9ULV0">
    <property type="GO annotations" value="7 GO annotations based on evolutionary models"/>
</dbReference>
<dbReference type="PhylomeDB" id="Q9ULV0"/>
<dbReference type="TreeFam" id="TF328771"/>
<dbReference type="PathwayCommons" id="Q9ULV0"/>
<dbReference type="Reactome" id="R-HSA-432040">
    <property type="pathway name" value="Vasopressin regulates renal water homeostasis via Aquaporins"/>
</dbReference>
<dbReference type="SignaLink" id="Q9ULV0"/>
<dbReference type="BioGRID-ORCS" id="4645">
    <property type="hits" value="8 hits in 1148 CRISPR screens"/>
</dbReference>
<dbReference type="ChiTaRS" id="MYO5B">
    <property type="organism name" value="human"/>
</dbReference>
<dbReference type="EvolutionaryTrace" id="Q9ULV0"/>
<dbReference type="GeneWiki" id="MYO5B"/>
<dbReference type="GenomeRNAi" id="4645"/>
<dbReference type="Pharos" id="Q9ULV0">
    <property type="development level" value="Tbio"/>
</dbReference>
<dbReference type="PRO" id="PR:Q9ULV0"/>
<dbReference type="Proteomes" id="UP000005640">
    <property type="component" value="Chromosome 18"/>
</dbReference>
<dbReference type="RNAct" id="Q9ULV0">
    <property type="molecule type" value="protein"/>
</dbReference>
<dbReference type="Bgee" id="ENSG00000167306">
    <property type="expression patterns" value="Expressed in ileal mucosa and 154 other cell types or tissues"/>
</dbReference>
<dbReference type="ExpressionAtlas" id="Q9ULV0">
    <property type="expression patterns" value="baseline and differential"/>
</dbReference>
<dbReference type="GO" id="GO:0015629">
    <property type="term" value="C:actin cytoskeleton"/>
    <property type="evidence" value="ECO:0000318"/>
    <property type="project" value="GO_Central"/>
</dbReference>
<dbReference type="GO" id="GO:0045179">
    <property type="term" value="C:apical cortex"/>
    <property type="evidence" value="ECO:0000314"/>
    <property type="project" value="UniProtKB"/>
</dbReference>
<dbReference type="GO" id="GO:0005737">
    <property type="term" value="C:cytoplasm"/>
    <property type="evidence" value="ECO:0000318"/>
    <property type="project" value="GO_Central"/>
</dbReference>
<dbReference type="GO" id="GO:0030659">
    <property type="term" value="C:cytoplasmic vesicle membrane"/>
    <property type="evidence" value="ECO:0000304"/>
    <property type="project" value="Reactome"/>
</dbReference>
<dbReference type="GO" id="GO:0070062">
    <property type="term" value="C:extracellular exosome"/>
    <property type="evidence" value="ECO:0007005"/>
    <property type="project" value="UniProtKB"/>
</dbReference>
<dbReference type="GO" id="GO:0016020">
    <property type="term" value="C:membrane"/>
    <property type="evidence" value="ECO:0000318"/>
    <property type="project" value="GO_Central"/>
</dbReference>
<dbReference type="GO" id="GO:0016459">
    <property type="term" value="C:myosin complex"/>
    <property type="evidence" value="ECO:0007669"/>
    <property type="project" value="UniProtKB-KW"/>
</dbReference>
<dbReference type="GO" id="GO:0032991">
    <property type="term" value="C:protein-containing complex"/>
    <property type="evidence" value="ECO:0000314"/>
    <property type="project" value="UniProtKB"/>
</dbReference>
<dbReference type="GO" id="GO:0051015">
    <property type="term" value="F:actin filament binding"/>
    <property type="evidence" value="ECO:0000318"/>
    <property type="project" value="GO_Central"/>
</dbReference>
<dbReference type="GO" id="GO:0005524">
    <property type="term" value="F:ATP binding"/>
    <property type="evidence" value="ECO:0007669"/>
    <property type="project" value="UniProtKB-KW"/>
</dbReference>
<dbReference type="GO" id="GO:0005516">
    <property type="term" value="F:calmodulin binding"/>
    <property type="evidence" value="ECO:0007669"/>
    <property type="project" value="UniProtKB-KW"/>
</dbReference>
<dbReference type="GO" id="GO:0000146">
    <property type="term" value="F:microfilament motor activity"/>
    <property type="evidence" value="ECO:0000318"/>
    <property type="project" value="GO_Central"/>
</dbReference>
<dbReference type="GO" id="GO:0031267">
    <property type="term" value="F:small GTPase binding"/>
    <property type="evidence" value="ECO:0000353"/>
    <property type="project" value="UniProtKB"/>
</dbReference>
<dbReference type="GO" id="GO:0007015">
    <property type="term" value="P:actin filament organization"/>
    <property type="evidence" value="ECO:0000318"/>
    <property type="project" value="GO_Central"/>
</dbReference>
<dbReference type="GO" id="GO:0016197">
    <property type="term" value="P:endosomal transport"/>
    <property type="evidence" value="ECO:0000315"/>
    <property type="project" value="UniProtKB"/>
</dbReference>
<dbReference type="GO" id="GO:0015031">
    <property type="term" value="P:protein transport"/>
    <property type="evidence" value="ECO:0007669"/>
    <property type="project" value="UniProtKB-KW"/>
</dbReference>
<dbReference type="GO" id="GO:0003091">
    <property type="term" value="P:renal water homeostasis"/>
    <property type="evidence" value="ECO:0000304"/>
    <property type="project" value="Reactome"/>
</dbReference>
<dbReference type="GO" id="GO:0016192">
    <property type="term" value="P:vesicle-mediated transport"/>
    <property type="evidence" value="ECO:0000315"/>
    <property type="project" value="UniProtKB"/>
</dbReference>
<dbReference type="CDD" id="cd15477">
    <property type="entry name" value="Myo5b_CBD"/>
    <property type="match status" value="1"/>
</dbReference>
<dbReference type="CDD" id="cd01380">
    <property type="entry name" value="MYSc_Myo5"/>
    <property type="match status" value="1"/>
</dbReference>
<dbReference type="FunFam" id="1.20.58.530:FF:000002">
    <property type="entry name" value="Class V myosin"/>
    <property type="match status" value="1"/>
</dbReference>
<dbReference type="FunFam" id="1.10.10.820:FF:000001">
    <property type="entry name" value="Myosin heavy chain"/>
    <property type="match status" value="1"/>
</dbReference>
<dbReference type="FunFam" id="1.20.5.190:FF:000006">
    <property type="entry name" value="Myosin VA"/>
    <property type="match status" value="1"/>
</dbReference>
<dbReference type="FunFam" id="1.20.120.720:FF:000016">
    <property type="entry name" value="Myosin VB"/>
    <property type="match status" value="1"/>
</dbReference>
<dbReference type="FunFam" id="1.20.5.190:FF:000037">
    <property type="entry name" value="Myosin VB"/>
    <property type="match status" value="1"/>
</dbReference>
<dbReference type="FunFam" id="1.20.5.190:FF:000039">
    <property type="entry name" value="Myosin VB"/>
    <property type="match status" value="1"/>
</dbReference>
<dbReference type="Gene3D" id="1.10.10.820">
    <property type="match status" value="1"/>
</dbReference>
<dbReference type="Gene3D" id="1.20.5.190">
    <property type="match status" value="3"/>
</dbReference>
<dbReference type="Gene3D" id="1.20.58.530">
    <property type="match status" value="1"/>
</dbReference>
<dbReference type="Gene3D" id="6.20.240.20">
    <property type="match status" value="1"/>
</dbReference>
<dbReference type="Gene3D" id="3.40.850.10">
    <property type="entry name" value="Kinesin motor domain"/>
    <property type="match status" value="1"/>
</dbReference>
<dbReference type="Gene3D" id="1.20.120.720">
    <property type="entry name" value="Myosin VI head, motor domain, U50 subdomain"/>
    <property type="match status" value="1"/>
</dbReference>
<dbReference type="InterPro" id="IPR002710">
    <property type="entry name" value="Dilute_dom"/>
</dbReference>
<dbReference type="InterPro" id="IPR000048">
    <property type="entry name" value="IQ_motif_EF-hand-BS"/>
</dbReference>
<dbReference type="InterPro" id="IPR036961">
    <property type="entry name" value="Kinesin_motor_dom_sf"/>
</dbReference>
<dbReference type="InterPro" id="IPR037990">
    <property type="entry name" value="Myo5b_CBD"/>
</dbReference>
<dbReference type="InterPro" id="IPR001609">
    <property type="entry name" value="Myosin_head_motor_dom-like"/>
</dbReference>
<dbReference type="InterPro" id="IPR004009">
    <property type="entry name" value="Myosin_N"/>
</dbReference>
<dbReference type="InterPro" id="IPR036103">
    <property type="entry name" value="MYSc_Myo5"/>
</dbReference>
<dbReference type="InterPro" id="IPR027417">
    <property type="entry name" value="P-loop_NTPase"/>
</dbReference>
<dbReference type="PANTHER" id="PTHR13140">
    <property type="entry name" value="MYOSIN"/>
    <property type="match status" value="1"/>
</dbReference>
<dbReference type="PANTHER" id="PTHR13140:SF356">
    <property type="entry name" value="UNCONVENTIONAL MYOSIN-VB"/>
    <property type="match status" value="1"/>
</dbReference>
<dbReference type="Pfam" id="PF01843">
    <property type="entry name" value="DIL"/>
    <property type="match status" value="1"/>
</dbReference>
<dbReference type="Pfam" id="PF00612">
    <property type="entry name" value="IQ"/>
    <property type="match status" value="6"/>
</dbReference>
<dbReference type="Pfam" id="PF00063">
    <property type="entry name" value="Myosin_head"/>
    <property type="match status" value="1"/>
</dbReference>
<dbReference type="PRINTS" id="PR00193">
    <property type="entry name" value="MYOSINHEAVY"/>
</dbReference>
<dbReference type="SMART" id="SM01132">
    <property type="entry name" value="DIL"/>
    <property type="match status" value="1"/>
</dbReference>
<dbReference type="SMART" id="SM00015">
    <property type="entry name" value="IQ"/>
    <property type="match status" value="6"/>
</dbReference>
<dbReference type="SMART" id="SM00242">
    <property type="entry name" value="MYSc"/>
    <property type="match status" value="1"/>
</dbReference>
<dbReference type="SUPFAM" id="SSF52540">
    <property type="entry name" value="P-loop containing nucleoside triphosphate hydrolases"/>
    <property type="match status" value="2"/>
</dbReference>
<dbReference type="PROSITE" id="PS51126">
    <property type="entry name" value="DILUTE"/>
    <property type="match status" value="1"/>
</dbReference>
<dbReference type="PROSITE" id="PS50096">
    <property type="entry name" value="IQ"/>
    <property type="match status" value="6"/>
</dbReference>
<dbReference type="PROSITE" id="PS51456">
    <property type="entry name" value="MYOSIN_MOTOR"/>
    <property type="match status" value="1"/>
</dbReference>
<dbReference type="PROSITE" id="PS51844">
    <property type="entry name" value="SH3_LIKE"/>
    <property type="match status" value="1"/>
</dbReference>
<feature type="chain" id="PRO_0000123460" description="Unconventional myosin-Vb">
    <location>
        <begin position="1"/>
        <end position="1848"/>
    </location>
</feature>
<feature type="domain" description="Myosin N-terminal SH3-like" evidence="6">
    <location>
        <begin position="8"/>
        <end position="60"/>
    </location>
</feature>
<feature type="domain" description="Myosin motor" evidence="5">
    <location>
        <begin position="69"/>
        <end position="761"/>
    </location>
</feature>
<feature type="domain" description="IQ 1" evidence="3">
    <location>
        <begin position="769"/>
        <end position="798"/>
    </location>
</feature>
<feature type="domain" description="IQ 2" evidence="3">
    <location>
        <begin position="792"/>
        <end position="821"/>
    </location>
</feature>
<feature type="domain" description="IQ 3" evidence="3">
    <location>
        <begin position="817"/>
        <end position="848"/>
    </location>
</feature>
<feature type="domain" description="IQ 4" evidence="3">
    <location>
        <begin position="840"/>
        <end position="869"/>
    </location>
</feature>
<feature type="domain" description="IQ 5" evidence="3">
    <location>
        <begin position="865"/>
        <end position="896"/>
    </location>
</feature>
<feature type="domain" description="IQ 6" evidence="3">
    <location>
        <begin position="888"/>
        <end position="917"/>
    </location>
</feature>
<feature type="domain" description="Dilute" evidence="4">
    <location>
        <begin position="1526"/>
        <end position="1803"/>
    </location>
</feature>
<feature type="region of interest" description="Requires for interaction with LIMA1" evidence="22">
    <location>
        <begin position="21"/>
        <end position="40"/>
    </location>
</feature>
<feature type="region of interest" description="Disordered" evidence="7">
    <location>
        <begin position="596"/>
        <end position="630"/>
    </location>
</feature>
<feature type="region of interest" description="Actin-binding" evidence="2">
    <location>
        <begin position="640"/>
        <end position="662"/>
    </location>
</feature>
<feature type="region of interest" description="Disordered" evidence="7">
    <location>
        <begin position="1093"/>
        <end position="1123"/>
    </location>
</feature>
<feature type="region of interest" description="Disordered" evidence="7">
    <location>
        <begin position="1166"/>
        <end position="1192"/>
    </location>
</feature>
<feature type="coiled-coil region" evidence="2">
    <location>
        <begin position="899"/>
        <end position="1266"/>
    </location>
</feature>
<feature type="coiled-coil region" evidence="2">
    <location>
        <begin position="1341"/>
        <end position="1471"/>
    </location>
</feature>
<feature type="compositionally biased region" description="Polar residues" evidence="7">
    <location>
        <begin position="1101"/>
        <end position="1121"/>
    </location>
</feature>
<feature type="compositionally biased region" description="Basic and acidic residues" evidence="7">
    <location>
        <begin position="1166"/>
        <end position="1179"/>
    </location>
</feature>
<feature type="binding site" evidence="2">
    <location>
        <begin position="163"/>
        <end position="170"/>
    </location>
    <ligand>
        <name>ATP</name>
        <dbReference type="ChEBI" id="CHEBI:30616"/>
    </ligand>
</feature>
<feature type="modified residue" description="Phosphoserine" evidence="31">
    <location>
        <position position="1446"/>
    </location>
</feature>
<feature type="splice variant" id="VSP_056198" description="In isoform 3." evidence="29">
    <location>
        <begin position="1"/>
        <end position="1430"/>
    </location>
</feature>
<feature type="splice variant" id="VSP_056199" description="In isoform 2." evidence="28">
    <location>
        <begin position="1"/>
        <end position="859"/>
    </location>
</feature>
<feature type="splice variant" id="VSP_056200" description="In isoform 2." evidence="28">
    <location>
        <begin position="1315"/>
        <end position="1340"/>
    </location>
</feature>
<feature type="sequence variant" id="VAR_056182" description="In dbSNP:rs16951438.">
    <original>C</original>
    <variation>G</variation>
    <location>
        <position position="10"/>
    </location>
</feature>
<feature type="sequence variant" id="VAR_087245" description="In DIAR2; dbSNP:rs2144390167." evidence="24">
    <original>H</original>
    <variation>R</variation>
    <location>
        <position position="81"/>
    </location>
</feature>
<feature type="sequence variant" id="VAR_087246" description="In DIAR2." evidence="23 24">
    <original>E</original>
    <variation>K</variation>
    <location>
        <position position="82"/>
    </location>
</feature>
<feature type="sequence variant" id="VAR_087247" description="In PFIC10; dbSNP:rs372682296." evidence="20 23 24 26">
    <original>R</original>
    <variation>C</variation>
    <location>
        <position position="92"/>
    </location>
</feature>
<feature type="sequence variant" id="VAR_054993" description="In DIAR2; dbSNP:rs121908103." evidence="12">
    <original>V</original>
    <variation>G</variation>
    <location>
        <position position="108"/>
    </location>
</feature>
<feature type="sequence variant" id="VAR_087248" description="In PFIC10; uncertain significance; dbSNP:rs2144383876." evidence="20">
    <original>Y</original>
    <variation>C</variation>
    <location>
        <position position="119"/>
    </location>
</feature>
<feature type="sequence variant" id="VAR_063141" description="In dbSNP:rs1815930." evidence="8 27">
    <original>T</original>
    <variation>A</variation>
    <location>
        <position position="126"/>
    </location>
</feature>
<feature type="sequence variant" id="VAR_071649" description="In DIAR2." evidence="15">
    <original>A</original>
    <variation>E</variation>
    <location>
        <position position="143"/>
    </location>
</feature>
<feature type="sequence variant" id="VAR_087249" description="In DIAR2." evidence="24">
    <location>
        <begin position="149"/>
        <end position="1848"/>
    </location>
</feature>
<feature type="sequence variant" id="VAR_087250" description="In PFIC10; uncertain significance; dbSNP:rs993447719." evidence="21">
    <original>S</original>
    <variation>F</variation>
    <location>
        <position position="158"/>
    </location>
</feature>
<feature type="sequence variant" id="VAR_071650" description="In DIAR2; dbSNP:rs1324907355." evidence="15">
    <original>G</original>
    <variation>R</variation>
    <location>
        <position position="168"/>
    </location>
</feature>
<feature type="sequence variant" id="VAR_054994" description="In DIAR2; dbSNP:rs1053713532." evidence="12 25">
    <original>R</original>
    <variation>H</variation>
    <location>
        <position position="219"/>
    </location>
</feature>
<feature type="sequence variant" id="VAR_087251" description="In PFIC10." evidence="26">
    <location>
        <begin position="252"/>
        <end position="1848"/>
    </location>
</feature>
<feature type="sequence variant" id="VAR_087252" description="In PFIC10; decreased ABCB11 targeting to the apical/canalicular plasma membrane in hepatocytes from a homozygous patient." evidence="21">
    <original>C</original>
    <variation>R</variation>
    <location>
        <position position="266"/>
    </location>
</feature>
<feature type="sequence variant" id="VAR_056183" description="In dbSNP:rs17659179.">
    <original>K</original>
    <variation>N</variation>
    <location>
        <position position="307"/>
    </location>
</feature>
<feature type="sequence variant" id="VAR_071651" description="In DIAR2; dbSNP:rs753558336." evidence="16">
    <original>G</original>
    <variation>R</variation>
    <location>
        <position position="316"/>
    </location>
</feature>
<feature type="sequence variant" id="VAR_087253" description="In DIAR2; uncertain significance; dbSNP:rs971419104." evidence="24">
    <original>G</original>
    <variation>V</variation>
    <location>
        <position position="316"/>
    </location>
</feature>
<feature type="sequence variant" id="VAR_087254" description="In DIAR2; uncertain significance." evidence="24">
    <original>G</original>
    <variation>R</variation>
    <location>
        <position position="336"/>
    </location>
</feature>
<feature type="sequence variant" id="VAR_087255" description="In PFIC10." evidence="21">
    <location>
        <begin position="341"/>
        <end position="1848"/>
    </location>
</feature>
<feature type="sequence variant" id="VAR_087256" description="In DIAR2." evidence="24">
    <location>
        <begin position="363"/>
        <end position="1848"/>
    </location>
</feature>
<feature type="sequence variant" id="VAR_087257" description="In PFIC10 and DIAR2; dbSNP:rs1275478557." evidence="23 24">
    <original>M</original>
    <variation>T</variation>
    <location>
        <position position="392"/>
    </location>
</feature>
<feature type="sequence variant" id="VAR_087258" description="In PFIC10; dbSNP:rs761492029." evidence="21">
    <original>R</original>
    <variation>C</variation>
    <location>
        <position position="401"/>
    </location>
</feature>
<feature type="sequence variant" id="VAR_071652" description="In DIAR2; dbSNP:rs1555648414." evidence="15">
    <original>R</original>
    <variation>H</variation>
    <location>
        <position position="401"/>
    </location>
</feature>
<feature type="sequence variant" id="VAR_087259" description="In DIAR2; uncertain significance; dbSNP:rs2144281575." evidence="24">
    <original>I</original>
    <variation>N</variation>
    <location>
        <position position="416"/>
    </location>
</feature>
<feature type="sequence variant" id="VAR_071653" description="In DIAR2; dbSNP:rs1283622290." evidence="15">
    <original>G</original>
    <variation>R</variation>
    <location>
        <position position="435"/>
    </location>
</feature>
<feature type="sequence variant" id="VAR_071654" description="In DIAR2; dbSNP:rs2025577640." evidence="16">
    <original>N</original>
    <variation>S</variation>
    <location>
        <position position="456"/>
    </location>
</feature>
<feature type="sequence variant" id="VAR_087260" description="In PFIC10; uncertain significance; dbSNP:rs780547885." evidence="23">
    <original>I</original>
    <variation>T</variation>
    <location>
        <position position="488"/>
    </location>
</feature>
<feature type="sequence variant" id="VAR_087261" description="In DIAR2; uncertain significance." evidence="24">
    <original>D</original>
    <variation>G</variation>
    <location>
        <position position="492"/>
    </location>
</feature>
<feature type="sequence variant" id="VAR_087262" description="In DIAR2; uncertain significance; dbSNP:rs751000651." evidence="24">
    <original>I</original>
    <variation>F</variation>
    <location>
        <position position="497"/>
    </location>
</feature>
<feature type="sequence variant" id="VAR_087263" description="In PFIC10; uncertain significance; dbSNP:rs1399711940." evidence="20">
    <original>I</original>
    <variation>T</variation>
    <location>
        <position position="500"/>
    </location>
</feature>
<feature type="sequence variant" id="VAR_071655" description="In DIAR2; dbSNP:rs760515993." evidence="16">
    <original>C</original>
    <variation>R</variation>
    <location>
        <position position="514"/>
    </location>
</feature>
<feature type="sequence variant" id="VAR_087264" description="In PFIC10; uncertain significance." evidence="26">
    <original>P</original>
    <variation>L</variation>
    <location>
        <position position="517"/>
    </location>
</feature>
<feature type="sequence variant" id="VAR_087265" description="In DIAR2." evidence="24">
    <location>
        <begin position="526"/>
        <end position="1848"/>
    </location>
</feature>
<feature type="sequence variant" id="VAR_087266" description="In PFIC10; uncertain significance; dbSNP:rs202201947." evidence="21">
    <original>S</original>
    <variation>N</variation>
    <location>
        <position position="535"/>
    </location>
</feature>
<feature type="sequence variant" id="VAR_087267" description="In DIAR2." evidence="25">
    <location>
        <begin position="536"/>
        <end position="1848"/>
    </location>
</feature>
<feature type="sequence variant" id="VAR_072814" description="In DIAR2; found in a compound heterozygote also carrying F-550; enterocytes carrying S-538 and F-550 display disruption of cell polarity, mislocalized apical and basolateral transporter proteins and altered distribution of endosomal/lysosomal constituents including Rab GTPases." evidence="18">
    <original>F</original>
    <variation>S</variation>
    <location>
        <position position="538"/>
    </location>
</feature>
<feature type="sequence variant" id="VAR_072815" description="In DIAR2; found in a compound heterozygote also carrying S-538; enterocytes carrying S-538 and F-550 display disruption of cell polarity, mislocalized apical and basolateral transporter proteins and altered distribution of endosomal/lysosomal constituents including Rab GTPases." evidence="18">
    <original>I</original>
    <variation>F</variation>
    <location>
        <position position="550"/>
    </location>
</feature>
<feature type="sequence variant" id="VAR_087268" description="In PFIC10; uncertain significance." evidence="24">
    <original>V</original>
    <variation>L</variation>
    <location>
        <position position="557"/>
    </location>
</feature>
<feature type="sequence variant" id="VAR_087269" description="In DIAR2." evidence="24">
    <location>
        <begin position="574"/>
        <end position="1848"/>
    </location>
</feature>
<feature type="sequence variant" id="VAR_087270" description="In DIAR2; uncertain significance." evidence="24">
    <original>L</original>
    <variation>P</variation>
    <location>
        <position position="580"/>
    </location>
</feature>
<feature type="sequence variant" id="VAR_087271" description="In PFIC10; uncertain significance." evidence="21">
    <original>S</original>
    <variation>N</variation>
    <location>
        <position position="583"/>
    </location>
</feature>
<feature type="sequence variant" id="VAR_087272" description="In PFIC10; uncertain significance." evidence="20">
    <original>L</original>
    <variation>P</variation>
    <location>
        <position position="642"/>
    </location>
</feature>
<feature type="sequence variant" id="VAR_087273" description="In PFIC10." evidence="26">
    <original>Y</original>
    <variation>C</variation>
    <location>
        <position position="654"/>
    </location>
</feature>
<feature type="sequence variant" id="VAR_054995" description="In DIAR2; dbSNP:rs121908105." evidence="12 24">
    <original>R</original>
    <variation>C</variation>
    <location>
        <position position="656"/>
    </location>
</feature>
<feature type="sequence variant" id="VAR_071656" description="In DIAR2; patient enterocytes show alterations in junctional composition, loss of polarity in basolateral and apical compartments, loss of apical brush border and formation of microvillus inclusions in cells at the villus tips; the mutation causes the motor to move slowly along F-actin; dbSNP:rs121908106." evidence="13 16 19">
    <original>P</original>
    <variation>L</variation>
    <location>
        <position position="660"/>
    </location>
</feature>
<feature type="sequence variant" id="VAR_087274" description="In DIAR2." evidence="24">
    <location>
        <begin position="672"/>
        <end position="1848"/>
    </location>
</feature>
<feature type="sequence variant" id="VAR_087275" description="In DIAR2; uncertain significance; dbSNP:rs1242133221." evidence="24">
    <original>T</original>
    <variation>M</variation>
    <location>
        <position position="686"/>
    </location>
</feature>
<feature type="sequence variant" id="VAR_087276" description="In DIAR2." evidence="24">
    <location>
        <begin position="749"/>
        <end position="1848"/>
    </location>
</feature>
<feature type="sequence variant" id="VAR_087277" description="In PFIC10; uncertain significance; dbSNP:rs575729461." evidence="20">
    <original>R</original>
    <variation>W</variation>
    <location>
        <position position="799"/>
    </location>
</feature>
<feature type="sequence variant" id="VAR_087278" description="In PFIC10; dbSNP:rs777038090." evidence="20 21 23 26">
    <original>R</original>
    <variation>C</variation>
    <location>
        <position position="824"/>
    </location>
</feature>
<feature type="sequence variant" id="VAR_087279" description="In DIAR2." evidence="25">
    <location>
        <begin position="874"/>
        <end position="1848"/>
    </location>
</feature>
<feature type="sequence variant" id="VAR_056184" description="In dbSNP:rs2298624.">
    <original>R</original>
    <variation>H</variation>
    <location>
        <position position="918"/>
    </location>
</feature>
<feature type="sequence variant" id="VAR_087280" description="In PFIC10; uncertain significance." evidence="21">
    <original>I</original>
    <variation>S</variation>
    <location>
        <position position="934"/>
    </location>
</feature>
<feature type="sequence variant" id="VAR_056185" description="In dbSNP:rs2277716.">
    <original>K</original>
    <variation>R</variation>
    <location>
        <position position="942"/>
    </location>
</feature>
<feature type="sequence variant" id="VAR_087281" description="In DIAR2 and PFIC10." evidence="21 23 24">
    <location>
        <begin position="1016"/>
        <end position="1848"/>
    </location>
</feature>
<feature type="sequence variant" id="VAR_063142" description="In dbSNP:rs72530399." evidence="8 27">
    <original>L</original>
    <variation>LL</variation>
    <location>
        <position position="1055"/>
    </location>
</feature>
<feature type="sequence variant" id="VAR_087282" description="In DIAR2." evidence="24">
    <location>
        <begin position="1064"/>
        <end position="1848"/>
    </location>
</feature>
<feature type="sequence variant" id="VAR_087283" description="In PFIC10; uncertain significance." evidence="21">
    <original>Q</original>
    <variation>H</variation>
    <location>
        <position position="1079"/>
    </location>
</feature>
<feature type="sequence variant" id="VAR_087284" description="In DIAR2." evidence="24">
    <location>
        <begin position="1172"/>
        <end position="1848"/>
    </location>
</feature>
<feature type="sequence variant" id="VAR_087285" description="In DIAR2; uncertain significance; dbSNP:rs2024227322." evidence="24">
    <original>L</original>
    <variation>P</variation>
    <location>
        <position position="1361"/>
    </location>
</feature>
<feature type="sequence variant" id="VAR_087286" description="In PFIC10." evidence="24">
    <location>
        <begin position="1375"/>
        <end position="1848"/>
    </location>
</feature>
<feature type="sequence variant" id="VAR_087287" description="In DIAR2." evidence="24">
    <location>
        <begin position="1467"/>
        <end position="1848"/>
    </location>
</feature>
<feature type="sequence variant" id="VAR_071657" description="In DIAR2." evidence="15">
    <original>L</original>
    <variation>R</variation>
    <location>
        <position position="1556"/>
    </location>
</feature>
<feature type="sequence variant" id="VAR_087288" description="In DIAR2." evidence="24">
    <location>
        <begin position="1600"/>
        <end position="1848"/>
    </location>
</feature>
<feature type="sequence variant" id="VAR_071658" description="In dbSNP:rs112417235." evidence="16">
    <original>M</original>
    <variation>V</variation>
    <location>
        <position position="1688"/>
    </location>
</feature>
<feature type="sequence variant" id="VAR_087289" description="In DIAR2." evidence="24">
    <location>
        <begin position="1795"/>
        <end position="1848"/>
    </location>
</feature>
<feature type="mutagenesis site" description="Abolishes interaction with RAB8A and has no effect on RAB11A interaction; when associated with C-1307." evidence="17">
    <original>Q</original>
    <variation>L</variation>
    <location>
        <position position="1300"/>
    </location>
</feature>
<feature type="mutagenesis site" description="Abolishes interaction with RAB8A and has no effect on RAB11A interaction; when associated with L-1300." evidence="17">
    <original>Y</original>
    <variation>C</variation>
    <location>
        <position position="1307"/>
    </location>
</feature>
<feature type="mutagenesis site" description="Abolishes interaction with RAB11A; has no effect on RAB8A interaction." evidence="17">
    <original>Y</original>
    <variation>E</variation>
    <location>
        <position position="1714"/>
    </location>
</feature>
<feature type="mutagenesis site" description="Abolishes interaction with RAB11A; has no effect on RAB8A interaction." evidence="17">
    <original>Q</original>
    <variation>R</variation>
    <location>
        <position position="1748"/>
    </location>
</feature>
<feature type="strand" evidence="33">
    <location>
        <begin position="1468"/>
        <end position="1471"/>
    </location>
</feature>
<feature type="helix" evidence="33">
    <location>
        <begin position="1474"/>
        <end position="1476"/>
    </location>
</feature>
<feature type="helix" evidence="33">
    <location>
        <begin position="1477"/>
        <end position="1484"/>
    </location>
</feature>
<feature type="turn" evidence="35">
    <location>
        <begin position="1485"/>
        <end position="1487"/>
    </location>
</feature>
<feature type="helix" evidence="33">
    <location>
        <begin position="1490"/>
        <end position="1493"/>
    </location>
</feature>
<feature type="helix" evidence="33">
    <location>
        <begin position="1500"/>
        <end position="1514"/>
    </location>
</feature>
<feature type="helix" evidence="33">
    <location>
        <begin position="1518"/>
        <end position="1538"/>
    </location>
</feature>
<feature type="turn" evidence="33">
    <location>
        <begin position="1539"/>
        <end position="1541"/>
    </location>
</feature>
<feature type="helix" evidence="33">
    <location>
        <begin position="1543"/>
        <end position="1562"/>
    </location>
</feature>
<feature type="helix" evidence="33">
    <location>
        <begin position="1567"/>
        <end position="1569"/>
    </location>
</feature>
<feature type="helix" evidence="33">
    <location>
        <begin position="1575"/>
        <end position="1578"/>
    </location>
</feature>
<feature type="helix" evidence="33">
    <location>
        <begin position="1588"/>
        <end position="1613"/>
    </location>
</feature>
<feature type="helix" evidence="33">
    <location>
        <begin position="1614"/>
        <end position="1616"/>
    </location>
</feature>
<feature type="helix" evidence="33">
    <location>
        <begin position="1617"/>
        <end position="1622"/>
    </location>
</feature>
<feature type="helix" evidence="33">
    <location>
        <begin position="1654"/>
        <end position="1670"/>
    </location>
</feature>
<feature type="helix" evidence="33">
    <location>
        <begin position="1675"/>
        <end position="1699"/>
    </location>
</feature>
<feature type="helix" evidence="33">
    <location>
        <begin position="1701"/>
        <end position="1703"/>
    </location>
</feature>
<feature type="helix" evidence="33">
    <location>
        <begin position="1706"/>
        <end position="1725"/>
    </location>
</feature>
<feature type="helix" evidence="34">
    <location>
        <begin position="1729"/>
        <end position="1731"/>
    </location>
</feature>
<feature type="helix" evidence="33">
    <location>
        <begin position="1733"/>
        <end position="1736"/>
    </location>
</feature>
<feature type="helix" evidence="33">
    <location>
        <begin position="1738"/>
        <end position="1746"/>
    </location>
</feature>
<feature type="helix" evidence="33">
    <location>
        <begin position="1754"/>
        <end position="1763"/>
    </location>
</feature>
<feature type="helix" evidence="33">
    <location>
        <begin position="1769"/>
        <end position="1778"/>
    </location>
</feature>
<feature type="helix" evidence="33">
    <location>
        <begin position="1791"/>
        <end position="1800"/>
    </location>
</feature>
<feature type="turn" evidence="33">
    <location>
        <begin position="1801"/>
        <end position="1803"/>
    </location>
</feature>
<feature type="helix" evidence="35">
    <location>
        <begin position="1831"/>
        <end position="1833"/>
    </location>
</feature>
<feature type="helix" evidence="33">
    <location>
        <begin position="1838"/>
        <end position="1840"/>
    </location>
</feature>
<feature type="strand" evidence="33">
    <location>
        <begin position="1845"/>
        <end position="1848"/>
    </location>
</feature>
<feature type="modified residue" description="N-acetylmethionine" evidence="32">
    <location sequence="Q9ULV0-3">
        <position position="1"/>
    </location>
</feature>
<comment type="function">
    <text evidence="16 17 25">May be involved in vesicular trafficking via its association with the CART complex. The CART complex is necessary for efficient transferrin receptor recycling but not for EGFR degradation. Required in a complex with RAB11A and RAB11FIP2 for the transport of NPC1L1 to the plasma membrane. Together with RAB11A participates in CFTR trafficking to the plasma membrane and TF (transferrin) recycling in nonpolarized cells. Together with RAB11A and RAB8A participates in epithelial cell polarization. Together with RAB25 regulates transcytosis. Required for proper localization of bile salt export pump ABCB11 at the apical/canalicular plasma membrane of hepatocytes (PubMed:34816459).</text>
</comment>
<comment type="subunit">
    <text evidence="9 10 11 14 17 22">Component of the CART complex, at least composed of ACTN4, HGS/HRS, MYO5B and TRIM3. Interacts with RAB11FIP2, RAB11A, and RAB8A. Found in a complex with CFTR and RAB11A. Interacts with NPC1L1; (PubMed:19542231). Interacts with LIMA1 (PubMed:29880681).</text>
</comment>
<comment type="interaction">
    <interactant intactId="EBI-311356">
        <id>Q9ULV0</id>
    </interactant>
    <interactant intactId="EBI-10187270">
        <id>Q9Y2J4-4</id>
        <label>AMOTL2</label>
    </interactant>
    <organismsDiffer>false</organismsDiffer>
    <experiments>3</experiments>
</comment>
<comment type="interaction">
    <interactant intactId="EBI-311356">
        <id>Q9ULV0</id>
    </interactant>
    <interactant intactId="EBI-752094">
        <id>Q12982</id>
        <label>BNIP2</label>
    </interactant>
    <organismsDiffer>false</organismsDiffer>
    <experiments>5</experiments>
</comment>
<comment type="interaction">
    <interactant intactId="EBI-311356">
        <id>Q9ULV0</id>
    </interactant>
    <interactant intactId="EBI-533224">
        <id>P15884</id>
        <label>TCF4</label>
    </interactant>
    <organismsDiffer>false</organismsDiffer>
    <experiments>3</experiments>
</comment>
<comment type="interaction">
    <interactant intactId="EBI-311356">
        <id>Q9ULV0</id>
    </interactant>
    <interactant intactId="EBI-2130429">
        <id>Q9BYV2</id>
        <label>TRIM54</label>
    </interactant>
    <organismsDiffer>false</organismsDiffer>
    <experiments>3</experiments>
</comment>
<comment type="interaction">
    <interactant intactId="EBI-14093244">
        <id>Q9ULV0-2</id>
    </interactant>
    <interactant intactId="EBI-746752">
        <id>Q9Y2J4</id>
        <label>AMOTL2</label>
    </interactant>
    <organismsDiffer>false</organismsDiffer>
    <experiments>3</experiments>
</comment>
<comment type="interaction">
    <interactant intactId="EBI-14093244">
        <id>Q9ULV0-2</id>
    </interactant>
    <interactant intactId="EBI-745689">
        <id>Q7L5A3</id>
        <label>ATOSB</label>
    </interactant>
    <organismsDiffer>false</organismsDiffer>
    <experiments>3</experiments>
</comment>
<comment type="interaction">
    <interactant intactId="EBI-14093244">
        <id>Q9ULV0-2</id>
    </interactant>
    <interactant intactId="EBI-752094">
        <id>Q12982</id>
        <label>BNIP2</label>
    </interactant>
    <organismsDiffer>false</organismsDiffer>
    <experiments>3</experiments>
</comment>
<comment type="interaction">
    <interactant intactId="EBI-14093244">
        <id>Q9ULV0-2</id>
    </interactant>
    <interactant intactId="EBI-2349927">
        <id>Q5JST6</id>
        <label>EFHC2</label>
    </interactant>
    <organismsDiffer>false</organismsDiffer>
    <experiments>3</experiments>
</comment>
<comment type="interaction">
    <interactant intactId="EBI-14093244">
        <id>Q9ULV0-2</id>
    </interactant>
    <interactant intactId="EBI-2548508">
        <id>Q96IK5</id>
        <label>GMCL1</label>
    </interactant>
    <organismsDiffer>false</organismsDiffer>
    <experiments>3</experiments>
</comment>
<comment type="interaction">
    <interactant intactId="EBI-14093244">
        <id>Q9ULV0-2</id>
    </interactant>
    <interactant intactId="EBI-19944212">
        <id>A8MW99</id>
        <label>MEI4</label>
    </interactant>
    <organismsDiffer>false</organismsDiffer>
    <experiments>3</experiments>
</comment>
<comment type="interaction">
    <interactant intactId="EBI-14093244">
        <id>Q9ULV0-2</id>
    </interactant>
    <interactant intactId="EBI-16439278">
        <id>Q6FHY5</id>
        <label>MEOX2</label>
    </interactant>
    <organismsDiffer>false</organismsDiffer>
    <experiments>3</experiments>
</comment>
<comment type="interaction">
    <interactant intactId="EBI-14093244">
        <id>Q9ULV0-2</id>
    </interactant>
    <interactant intactId="EBI-745098">
        <id>P62491</id>
        <label>RAB11A</label>
    </interactant>
    <organismsDiffer>false</organismsDiffer>
    <experiments>3</experiments>
</comment>
<comment type="interaction">
    <interactant intactId="EBI-14093244">
        <id>Q9ULV0-2</id>
    </interactant>
    <interactant intactId="EBI-722234">
        <id>Q15907</id>
        <label>RAB11B</label>
    </interactant>
    <organismsDiffer>false</organismsDiffer>
    <experiments>3</experiments>
</comment>
<comment type="interaction">
    <interactant intactId="EBI-14093244">
        <id>Q9ULV0-2</id>
    </interactant>
    <interactant intactId="EBI-1050500">
        <id>P57735</id>
        <label>RAB25</label>
    </interactant>
    <organismsDiffer>false</organismsDiffer>
    <experiments>3</experiments>
</comment>
<comment type="interaction">
    <interactant intactId="EBI-14093244">
        <id>Q9ULV0-2</id>
    </interactant>
    <interactant intactId="EBI-13636688">
        <id>P15884-3</id>
        <label>TCF4</label>
    </interactant>
    <organismsDiffer>false</organismsDiffer>
    <experiments>3</experiments>
</comment>
<comment type="interaction">
    <interactant intactId="EBI-14093244">
        <id>Q9ULV0-2</id>
    </interactant>
    <interactant intactId="EBI-2129889">
        <id>O75382</id>
        <label>TRIM3</label>
    </interactant>
    <organismsDiffer>false</organismsDiffer>
    <experiments>3</experiments>
</comment>
<comment type="interaction">
    <interactant intactId="EBI-14093244">
        <id>Q9ULV0-2</id>
    </interactant>
    <interactant intactId="EBI-2130429">
        <id>Q9BYV2</id>
        <label>TRIM54</label>
    </interactant>
    <organismsDiffer>false</organismsDiffer>
    <experiments>3</experiments>
</comment>
<comment type="interaction">
    <interactant intactId="EBI-14093244">
        <id>Q9ULV0-2</id>
    </interactant>
    <interactant intactId="EBI-347522">
        <id>O43257</id>
        <label>ZNHIT1</label>
    </interactant>
    <organismsDiffer>false</organismsDiffer>
    <experiments>3</experiments>
</comment>
<comment type="subcellular location">
    <subcellularLocation>
        <location evidence="1">Cytoplasm</location>
    </subcellularLocation>
</comment>
<comment type="alternative products">
    <event type="alternative splicing"/>
    <isoform>
        <id>Q9ULV0-1</id>
        <name>1</name>
        <sequence type="displayed"/>
    </isoform>
    <isoform>
        <id>Q9ULV0-2</id>
        <name>2</name>
        <sequence type="described" ref="VSP_056199 VSP_056200"/>
    </isoform>
    <isoform>
        <id>Q9ULV0-3</id>
        <name>3</name>
        <sequence type="described" ref="VSP_056198"/>
    </isoform>
</comment>
<comment type="disease" evidence="12 13 15 16 18 19 23 24 25">
    <disease id="DI-01979">
        <name>Diarrhea 2, with microvillus atrophy, with or without cholestasis</name>
        <acronym>DIAR2</acronym>
        <description>A disease characterized by onset of intractable life-threatening watery diarrhea during infancy. Two forms are recognized: early-onset microvillus inclusion disease with diarrhea beginning in the neonatal period, and late-onset, with first symptoms appearing after 3 or 4 months of life.</description>
        <dbReference type="MIM" id="251850"/>
    </disease>
    <text>The disease is caused by variants affecting the gene represented in this entry.</text>
</comment>
<comment type="disease" evidence="20 21 23 24 26">
    <disease id="DI-06418">
        <name>Cholestasis, progressive familial intrahepatic, 10</name>
        <acronym>PFIC10</acronym>
        <description>A form of progressive cholestasis, a disorder characterized by early onset of cholestasis that progresses to hepatic fibrosis, cirrhosis, and end-stage liver disease. PFIC10 is an autosomal recessive form with highly variable phenotype and severity, manifesting in the first months or years of life.</description>
        <dbReference type="MIM" id="619868"/>
    </disease>
    <text>The disease is caused by variants affecting the gene represented in this entry.</text>
</comment>
<comment type="similarity">
    <text evidence="30">Belongs to the TRAFAC class myosin-kinesin ATPase superfamily. Myosin family.</text>
</comment>
<comment type="sequence caution" evidence="30">
    <conflict type="erroneous initiation">
        <sequence resource="EMBL-CDS" id="BAA86433"/>
    </conflict>
    <text>Extended N-terminus.</text>
</comment>
<reference key="1">
    <citation type="journal article" date="1999" name="DNA Res.">
        <title>Characterization of cDNA clones selected by the GeneMark analysis from size-fractionated cDNA libraries from human brain.</title>
        <authorList>
            <person name="Hirosawa M."/>
            <person name="Nagase T."/>
            <person name="Ishikawa K."/>
            <person name="Kikuno R."/>
            <person name="Nomura N."/>
            <person name="Ohara O."/>
        </authorList>
    </citation>
    <scope>NUCLEOTIDE SEQUENCE [LARGE SCALE MRNA] (ISOFORM 1)</scope>
    <scope>VARIANTS ALA-126 AND LEU-1055 INS</scope>
    <source>
        <tissue>Brain</tissue>
    </source>
</reference>
<reference key="2">
    <citation type="submission" date="2003-04" db="EMBL/GenBank/DDBJ databases">
        <authorList>
            <person name="Ohara O."/>
            <person name="Nagase T."/>
            <person name="Yamakawa H."/>
            <person name="Kikuno R."/>
        </authorList>
    </citation>
    <scope>SEQUENCE REVISION TO N-TERMINUS AND 918</scope>
</reference>
<reference key="3">
    <citation type="journal article" date="2004" name="Nat. Genet.">
        <title>Complete sequencing and characterization of 21,243 full-length human cDNAs.</title>
        <authorList>
            <person name="Ota T."/>
            <person name="Suzuki Y."/>
            <person name="Nishikawa T."/>
            <person name="Otsuki T."/>
            <person name="Sugiyama T."/>
            <person name="Irie R."/>
            <person name="Wakamatsu A."/>
            <person name="Hayashi K."/>
            <person name="Sato H."/>
            <person name="Nagai K."/>
            <person name="Kimura K."/>
            <person name="Makita H."/>
            <person name="Sekine M."/>
            <person name="Obayashi M."/>
            <person name="Nishi T."/>
            <person name="Shibahara T."/>
            <person name="Tanaka T."/>
            <person name="Ishii S."/>
            <person name="Yamamoto J."/>
            <person name="Saito K."/>
            <person name="Kawai Y."/>
            <person name="Isono Y."/>
            <person name="Nakamura Y."/>
            <person name="Nagahari K."/>
            <person name="Murakami K."/>
            <person name="Yasuda T."/>
            <person name="Iwayanagi T."/>
            <person name="Wagatsuma M."/>
            <person name="Shiratori A."/>
            <person name="Sudo H."/>
            <person name="Hosoiri T."/>
            <person name="Kaku Y."/>
            <person name="Kodaira H."/>
            <person name="Kondo H."/>
            <person name="Sugawara M."/>
            <person name="Takahashi M."/>
            <person name="Kanda K."/>
            <person name="Yokoi T."/>
            <person name="Furuya T."/>
            <person name="Kikkawa E."/>
            <person name="Omura Y."/>
            <person name="Abe K."/>
            <person name="Kamihara K."/>
            <person name="Katsuta N."/>
            <person name="Sato K."/>
            <person name="Tanikawa M."/>
            <person name="Yamazaki M."/>
            <person name="Ninomiya K."/>
            <person name="Ishibashi T."/>
            <person name="Yamashita H."/>
            <person name="Murakawa K."/>
            <person name="Fujimori K."/>
            <person name="Tanai H."/>
            <person name="Kimata M."/>
            <person name="Watanabe M."/>
            <person name="Hiraoka S."/>
            <person name="Chiba Y."/>
            <person name="Ishida S."/>
            <person name="Ono Y."/>
            <person name="Takiguchi S."/>
            <person name="Watanabe S."/>
            <person name="Yosida M."/>
            <person name="Hotuta T."/>
            <person name="Kusano J."/>
            <person name="Kanehori K."/>
            <person name="Takahashi-Fujii A."/>
            <person name="Hara H."/>
            <person name="Tanase T.-O."/>
            <person name="Nomura Y."/>
            <person name="Togiya S."/>
            <person name="Komai F."/>
            <person name="Hara R."/>
            <person name="Takeuchi K."/>
            <person name="Arita M."/>
            <person name="Imose N."/>
            <person name="Musashino K."/>
            <person name="Yuuki H."/>
            <person name="Oshima A."/>
            <person name="Sasaki N."/>
            <person name="Aotsuka S."/>
            <person name="Yoshikawa Y."/>
            <person name="Matsunawa H."/>
            <person name="Ichihara T."/>
            <person name="Shiohata N."/>
            <person name="Sano S."/>
            <person name="Moriya S."/>
            <person name="Momiyama H."/>
            <person name="Satoh N."/>
            <person name="Takami S."/>
            <person name="Terashima Y."/>
            <person name="Suzuki O."/>
            <person name="Nakagawa S."/>
            <person name="Senoh A."/>
            <person name="Mizoguchi H."/>
            <person name="Goto Y."/>
            <person name="Shimizu F."/>
            <person name="Wakebe H."/>
            <person name="Hishigaki H."/>
            <person name="Watanabe T."/>
            <person name="Sugiyama A."/>
            <person name="Takemoto M."/>
            <person name="Kawakami B."/>
            <person name="Yamazaki M."/>
            <person name="Watanabe K."/>
            <person name="Kumagai A."/>
            <person name="Itakura S."/>
            <person name="Fukuzumi Y."/>
            <person name="Fujimori Y."/>
            <person name="Komiyama M."/>
            <person name="Tashiro H."/>
            <person name="Tanigami A."/>
            <person name="Fujiwara T."/>
            <person name="Ono T."/>
            <person name="Yamada K."/>
            <person name="Fujii Y."/>
            <person name="Ozaki K."/>
            <person name="Hirao M."/>
            <person name="Ohmori Y."/>
            <person name="Kawabata A."/>
            <person name="Hikiji T."/>
            <person name="Kobatake N."/>
            <person name="Inagaki H."/>
            <person name="Ikema Y."/>
            <person name="Okamoto S."/>
            <person name="Okitani R."/>
            <person name="Kawakami T."/>
            <person name="Noguchi S."/>
            <person name="Itoh T."/>
            <person name="Shigeta K."/>
            <person name="Senba T."/>
            <person name="Matsumura K."/>
            <person name="Nakajima Y."/>
            <person name="Mizuno T."/>
            <person name="Morinaga M."/>
            <person name="Sasaki M."/>
            <person name="Togashi T."/>
            <person name="Oyama M."/>
            <person name="Hata H."/>
            <person name="Watanabe M."/>
            <person name="Komatsu T."/>
            <person name="Mizushima-Sugano J."/>
            <person name="Satoh T."/>
            <person name="Shirai Y."/>
            <person name="Takahashi Y."/>
            <person name="Nakagawa K."/>
            <person name="Okumura K."/>
            <person name="Nagase T."/>
            <person name="Nomura N."/>
            <person name="Kikuchi H."/>
            <person name="Masuho Y."/>
            <person name="Yamashita R."/>
            <person name="Nakai K."/>
            <person name="Yada T."/>
            <person name="Nakamura Y."/>
            <person name="Ohara O."/>
            <person name="Isogai T."/>
            <person name="Sugano S."/>
        </authorList>
    </citation>
    <scope>NUCLEOTIDE SEQUENCE [LARGE SCALE MRNA] (ISOFORM 2)</scope>
    <source>
        <tissue>Colon</tissue>
    </source>
</reference>
<reference key="4">
    <citation type="submission" date="2007-01" db="EMBL/GenBank/DDBJ databases">
        <title>Multiplex amplification and cloning of 5'-ends of cDNA by ligase-free recombination: preparation of full-length cDNA clones encoding motor proteins.</title>
        <authorList>
            <person name="Yamakawa H."/>
            <person name="Kikuno R.F."/>
            <person name="Nagase T."/>
            <person name="Ohara O."/>
        </authorList>
    </citation>
    <scope>NUCLEOTIDE SEQUENCE [LARGE SCALE MRNA] (ISOFORM 1)</scope>
    <scope>VARIANTS ALA-126 AND LEU-1055 INS</scope>
    <source>
        <tissue>Brain</tissue>
    </source>
</reference>
<reference key="5">
    <citation type="journal article" date="2005" name="Nature">
        <title>DNA sequence and analysis of human chromosome 18.</title>
        <authorList>
            <person name="Nusbaum C."/>
            <person name="Zody M.C."/>
            <person name="Borowsky M.L."/>
            <person name="Kamal M."/>
            <person name="Kodira C.D."/>
            <person name="Taylor T.D."/>
            <person name="Whittaker C.A."/>
            <person name="Chang J.L."/>
            <person name="Cuomo C.A."/>
            <person name="Dewar K."/>
            <person name="FitzGerald M.G."/>
            <person name="Yang X."/>
            <person name="Abouelleil A."/>
            <person name="Allen N.R."/>
            <person name="Anderson S."/>
            <person name="Bloom T."/>
            <person name="Bugalter B."/>
            <person name="Butler J."/>
            <person name="Cook A."/>
            <person name="DeCaprio D."/>
            <person name="Engels R."/>
            <person name="Garber M."/>
            <person name="Gnirke A."/>
            <person name="Hafez N."/>
            <person name="Hall J.L."/>
            <person name="Norman C.H."/>
            <person name="Itoh T."/>
            <person name="Jaffe D.B."/>
            <person name="Kuroki Y."/>
            <person name="Lehoczky J."/>
            <person name="Lui A."/>
            <person name="Macdonald P."/>
            <person name="Mauceli E."/>
            <person name="Mikkelsen T.S."/>
            <person name="Naylor J.W."/>
            <person name="Nicol R."/>
            <person name="Nguyen C."/>
            <person name="Noguchi H."/>
            <person name="O'Leary S.B."/>
            <person name="Piqani B."/>
            <person name="Smith C.L."/>
            <person name="Talamas J.A."/>
            <person name="Topham K."/>
            <person name="Totoki Y."/>
            <person name="Toyoda A."/>
            <person name="Wain H.M."/>
            <person name="Young S.K."/>
            <person name="Zeng Q."/>
            <person name="Zimmer A.R."/>
            <person name="Fujiyama A."/>
            <person name="Hattori M."/>
            <person name="Birren B.W."/>
            <person name="Sakaki Y."/>
            <person name="Lander E.S."/>
        </authorList>
    </citation>
    <scope>NUCLEOTIDE SEQUENCE [LARGE SCALE GENOMIC DNA]</scope>
</reference>
<reference key="6">
    <citation type="journal article" date="2004" name="Genome Res.">
        <title>The status, quality, and expansion of the NIH full-length cDNA project: the Mammalian Gene Collection (MGC).</title>
        <authorList>
            <consortium name="The MGC Project Team"/>
        </authorList>
    </citation>
    <scope>NUCLEOTIDE SEQUENCE [LARGE SCALE MRNA] (ISOFORM 3)</scope>
    <source>
        <tissue>Colon</tissue>
    </source>
</reference>
<reference key="7">
    <citation type="journal article" date="2001" name="J. Biol. Chem.">
        <title>Identification and characterization of a family of Rab11-interacting proteins.</title>
        <authorList>
            <person name="Hales C.M."/>
            <person name="Griner R."/>
            <person name="Hobdy-Henderson K.C."/>
            <person name="Dorn M.C."/>
            <person name="Hardy D."/>
            <person name="Kumar R."/>
            <person name="Navarre J."/>
            <person name="Chan E.K.L."/>
            <person name="Lapierre L.A."/>
            <person name="Goldenring J.R."/>
        </authorList>
    </citation>
    <scope>INTERACTION WITH RAB11FIP2</scope>
</reference>
<reference key="8">
    <citation type="journal article" date="2005" name="Mol. Biol. Cell">
        <title>CART: an Hrs/actinin-4/BERP/myosin V protein complex required for efficient receptor recycling.</title>
        <authorList>
            <person name="Yan Q."/>
            <person name="Sun W."/>
            <person name="Kujala P."/>
            <person name="Lotfi Y."/>
            <person name="Vida T.A."/>
            <person name="Bean A.J."/>
        </authorList>
    </citation>
    <scope>IDENTIFICATION IN THE CART COMPLEX</scope>
</reference>
<reference key="9">
    <citation type="journal article" date="2007" name="J. Biol. Chem.">
        <title>Myosin Vb is required for trafficking of the cystic fibrosis transmembrane conductance regulator in Rab11a-specific apical recycling endosomes in polarized human airway epithelial cells.</title>
        <authorList>
            <person name="Swiatecka-Urban A."/>
            <person name="Talebian L."/>
            <person name="Kanno E."/>
            <person name="Moreau-Marquis S."/>
            <person name="Coutermarsh B."/>
            <person name="Hansen K."/>
            <person name="Karlson K.H."/>
            <person name="Barnaby R."/>
            <person name="Cheney R.E."/>
            <person name="Langford G.M."/>
            <person name="Fukuda M."/>
            <person name="Stanton B.A."/>
        </authorList>
    </citation>
    <scope>FUNCTION</scope>
    <scope>INTERACTION WITH RAB11A</scope>
    <scope>IDENTIFICATION IN A COMPLEX WITH RAB11A AND CFTR</scope>
</reference>
<reference key="10">
    <citation type="journal article" date="2008" name="Proc. Natl. Acad. Sci. U.S.A.">
        <title>A quantitative atlas of mitotic phosphorylation.</title>
        <authorList>
            <person name="Dephoure N."/>
            <person name="Zhou C."/>
            <person name="Villen J."/>
            <person name="Beausoleil S.A."/>
            <person name="Bakalarski C.E."/>
            <person name="Elledge S.J."/>
            <person name="Gygi S.P."/>
        </authorList>
    </citation>
    <scope>IDENTIFICATION BY MASS SPECTROMETRY [LARGE SCALE ANALYSIS]</scope>
    <source>
        <tissue>Cervix carcinoma</tissue>
    </source>
</reference>
<reference key="11">
    <citation type="journal article" date="2009" name="J. Biol. Chem.">
        <title>Requirement of myosin Vb.Rab11a.Rab11-FIP2 complex in cholesterol-regulated translocation of NPC1L1 to the cell surface.</title>
        <authorList>
            <person name="Chu B.-B."/>
            <person name="Ge L."/>
            <person name="Xie C."/>
            <person name="Zhao Y."/>
            <person name="Miao H.-H."/>
            <person name="Wang J."/>
            <person name="Li B.-L."/>
            <person name="Song B.-L."/>
        </authorList>
    </citation>
    <scope>FUNCTION</scope>
    <scope>INTERACTION WITH NPC1L1</scope>
</reference>
<reference key="12">
    <citation type="journal article" date="2010" name="Sci. Signal.">
        <title>Quantitative phosphoproteomics reveals widespread full phosphorylation site occupancy during mitosis.</title>
        <authorList>
            <person name="Olsen J.V."/>
            <person name="Vermeulen M."/>
            <person name="Santamaria A."/>
            <person name="Kumar C."/>
            <person name="Miller M.L."/>
            <person name="Jensen L.J."/>
            <person name="Gnad F."/>
            <person name="Cox J."/>
            <person name="Jensen T.S."/>
            <person name="Nigg E.A."/>
            <person name="Brunak S."/>
            <person name="Mann M."/>
        </authorList>
    </citation>
    <scope>PHOSPHORYLATION [LARGE SCALE ANALYSIS] AT SER-1446</scope>
    <scope>IDENTIFICATION BY MASS SPECTROMETRY [LARGE SCALE ANALYSIS]</scope>
    <source>
        <tissue>Cervix carcinoma</tissue>
    </source>
</reference>
<reference key="13">
    <citation type="journal article" date="2011" name="J. Pediatr. Gastroenterol. Nutr.">
        <title>Functional characterization of mutations in the myosin Vb gene associated with microvillus inclusion disease.</title>
        <authorList>
            <person name="Szperl A.M."/>
            <person name="Golachowska M.R."/>
            <person name="Bruinenberg M."/>
            <person name="Prekeris R."/>
            <person name="Thunnissen A.M."/>
            <person name="Karrenbeld A."/>
            <person name="Dijkstra G."/>
            <person name="Hoekstra D."/>
            <person name="Mercer D."/>
            <person name="Ksiazyk J."/>
            <person name="Wijmenga C."/>
            <person name="Wapenaar M.C."/>
            <person name="Rings E.H."/>
            <person name="van Ijzendoorn S.C."/>
        </authorList>
    </citation>
    <scope>FUNCTION</scope>
    <scope>VARIANTS DIAR2 ARG-316; SER-456; ARG-514 AND LEU-660</scope>
    <scope>VARIANT VAL-1688</scope>
</reference>
<reference key="14">
    <citation type="journal article" date="2011" name="Proc. Natl. Acad. Sci. U.S.A.">
        <title>Rab GTPase-Myo5B complexes control membrane recycling and epithelial polarization.</title>
        <authorList>
            <person name="Roland J.T."/>
            <person name="Bryant D.M."/>
            <person name="Datta A."/>
            <person name="Itzen A."/>
            <person name="Mostov K.E."/>
            <person name="Goldenring J.R."/>
        </authorList>
    </citation>
    <scope>FUNCTION</scope>
    <scope>INTERACTION WITH RAB11A AND RAB8A</scope>
    <scope>MUTAGENESIS OF GLN-1300; TYR-1307; TYR-1714 AND GLN-1748</scope>
</reference>
<reference key="15">
    <citation type="journal article" date="2012" name="Proc. Natl. Acad. Sci. U.S.A.">
        <title>N-terminal acetylome analyses and functional insights of the N-terminal acetyltransferase NatB.</title>
        <authorList>
            <person name="Van Damme P."/>
            <person name="Lasa M."/>
            <person name="Polevoda B."/>
            <person name="Gazquez C."/>
            <person name="Elosegui-Artola A."/>
            <person name="Kim D.S."/>
            <person name="De Juan-Pardo E."/>
            <person name="Demeyer K."/>
            <person name="Hole K."/>
            <person name="Larrea E."/>
            <person name="Timmerman E."/>
            <person name="Prieto J."/>
            <person name="Arnesen T."/>
            <person name="Sherman F."/>
            <person name="Gevaert K."/>
            <person name="Aldabe R."/>
        </authorList>
    </citation>
    <scope>ACETYLATION [LARGE SCALE ANALYSIS] AT MET-1 (ISOFORM 3)</scope>
    <scope>IDENTIFICATION BY MASS SPECTROMETRY [LARGE SCALE ANALYSIS]</scope>
</reference>
<reference key="16">
    <citation type="journal article" date="2018" name="Science">
        <title>A LIMA1 variant promotes low plasma LDL cholesterol and decreases intestinal cholesterol absorption.</title>
        <authorList>
            <person name="Zhang Y.Y."/>
            <person name="Fu Z.Y."/>
            <person name="Wei J."/>
            <person name="Qi W."/>
            <person name="Baituola G."/>
            <person name="Luo J."/>
            <person name="Meng Y.J."/>
            <person name="Guo S.Y."/>
            <person name="Yin H."/>
            <person name="Jiang S.Y."/>
            <person name="Li Y.F."/>
            <person name="Miao H.H."/>
            <person name="Liu Y."/>
            <person name="Wang Y."/>
            <person name="Li B.L."/>
            <person name="Ma Y.T."/>
            <person name="Song B.L."/>
        </authorList>
    </citation>
    <scope>INTERACTION WITH LIMA1</scope>
</reference>
<reference key="17">
    <citation type="journal article" date="2008" name="Am. J. Med. Genet. A">
        <title>Navajo microvillous inclusion disease is due to a mutation in MYO5B.</title>
        <authorList>
            <person name="Erickson R.P."/>
            <person name="Larson-Thome K."/>
            <person name="Valenzuela R.K."/>
            <person name="Whitaker S.E."/>
            <person name="Shub M.D."/>
        </authorList>
    </citation>
    <scope>VARIANT DIAR2 LEU-660</scope>
</reference>
<reference key="18">
    <citation type="journal article" date="2008" name="Nat. Genet.">
        <title>MYO5B mutations cause microvillus inclusion disease and disrupt epithelial cell polarity.</title>
        <authorList>
            <person name="Mueller T."/>
            <person name="Hess M.W."/>
            <person name="Schiefermeier N."/>
            <person name="Pfaller K."/>
            <person name="Ebner H.L."/>
            <person name="Heinz-Erian P."/>
            <person name="Ponstingl H."/>
            <person name="Partsch J."/>
            <person name="Roellinghoff B."/>
            <person name="Koehler H."/>
            <person name="Berger T."/>
            <person name="Lenhartz H."/>
            <person name="Schlenck B."/>
            <person name="Houwen R.J."/>
            <person name="Taylor C.J."/>
            <person name="Zoller H."/>
            <person name="Lechner S."/>
            <person name="Goulet O."/>
            <person name="Utermann G."/>
            <person name="Ruemmele F.M."/>
            <person name="Huber L.A."/>
            <person name="Janecke A.R."/>
        </authorList>
    </citation>
    <scope>VARIANTS DIAR2 GLY-108; HIS-219 AND CYS-656</scope>
</reference>
<reference key="19">
    <citation type="journal article" date="2010" name="Hum. Mutat.">
        <title>Loss-of-function of MYO5B is the main cause of microvillus inclusion disease: 15 novel mutations and a CaCo-2 RNAi cell model.</title>
        <authorList>
            <person name="Ruemmele F.M."/>
            <person name="Muller T."/>
            <person name="Schiefermeier N."/>
            <person name="Ebner H.L."/>
            <person name="Lechner S."/>
            <person name="Pfaller K."/>
            <person name="Thoni C.E."/>
            <person name="Goulet O."/>
            <person name="Lacaille F."/>
            <person name="Schmitz J."/>
            <person name="Colomb V."/>
            <person name="Sauvat F."/>
            <person name="Revillon Y."/>
            <person name="Canioni D."/>
            <person name="Brousse N."/>
            <person name="de Saint-Basile G."/>
            <person name="Lefebvre J."/>
            <person name="Heinz-Erian P."/>
            <person name="Enninger A."/>
            <person name="Utermann G."/>
            <person name="Hess M.W."/>
            <person name="Janecke A.R."/>
            <person name="Huber L.A."/>
        </authorList>
    </citation>
    <scope>VARIANTS DIAR2 GLU-143; ARG-168; HIS-401; ARG-435 AND ARG-1556</scope>
</reference>
<reference key="20">
    <citation type="journal article" date="2014" name="Traffic">
        <title>Microvillus inclusion disease: loss of Myosin vb disrupts intracellular traffic and cell polarity.</title>
        <authorList>
            <person name="Thoeni C.E."/>
            <person name="Vogel G.F."/>
            <person name="Tancevski I."/>
            <person name="Geley S."/>
            <person name="Lechner S."/>
            <person name="Pfaller K."/>
            <person name="Hess M.W."/>
            <person name="Muller T."/>
            <person name="Janecke A.R."/>
            <person name="Avitzur Y."/>
            <person name="Muise A."/>
            <person name="Cutz E."/>
            <person name="Huber L.A."/>
        </authorList>
    </citation>
    <scope>VARIANTS DIAR2 SER-538 AND PHE-550</scope>
</reference>
<reference key="21">
    <citation type="journal article" date="2014" name="J. Clin. Invest.">
        <title>Myosin Vb uncoupling from RAB8A and RAB11A elicits microvillus inclusion disease.</title>
        <authorList>
            <person name="Knowles B.C."/>
            <person name="Roland J.T."/>
            <person name="Krishnan M."/>
            <person name="Tyska M.J."/>
            <person name="Lapierre L.A."/>
            <person name="Dickman P.S."/>
            <person name="Goldenring J.R."/>
            <person name="Shub M.D."/>
        </authorList>
    </citation>
    <scope>VARIANT DIAR2 LEU-660</scope>
    <scope>CHARACTERIZATION OF VARIANT DIAR2 LEU-660</scope>
</reference>
<reference key="22">
    <citation type="journal article" date="2017" name="Hepatology">
        <title>MYO5B mutations cause cholestasis with normal serum gamma-glutamyl transferase activity in children without microvillous inclusion disease.</title>
        <authorList>
            <person name="Gonzales E."/>
            <person name="Taylor S.A."/>
            <person name="Davit-Spraul A."/>
            <person name="Thebaut A."/>
            <person name="Thomassin N."/>
            <person name="Guettier C."/>
            <person name="Whitington P.F."/>
            <person name="Jacquemin E."/>
        </authorList>
    </citation>
    <scope>VARIANTS PFIC10 CYS-92; CYS-119; THR-500; PRO-642; TRP-799 AND CYS-824</scope>
    <scope>INVOLVEMENT IN PFIC10</scope>
</reference>
<reference key="23">
    <citation type="journal article" date="2017" name="Hepatology">
        <title>Defects in myosin VB are associated with a spectrum of previously undiagnosed low gamma-glutamyltransferase cholestasis.</title>
        <authorList>
            <person name="Qiu Y.L."/>
            <person name="Gong J.Y."/>
            <person name="Feng J.Y."/>
            <person name="Wang R.X."/>
            <person name="Han J."/>
            <person name="Liu T."/>
            <person name="Lu Y."/>
            <person name="Li L.T."/>
            <person name="Zhang M.H."/>
            <person name="Sheps J.A."/>
            <person name="Wang N.L."/>
            <person name="Yan Y.Y."/>
            <person name="Li J.Q."/>
            <person name="Chen L."/>
            <person name="Borchers C.H."/>
            <person name="Sipos B."/>
            <person name="Knisely A.S."/>
            <person name="Ling V."/>
            <person name="Xing Q.H."/>
            <person name="Wang J.S."/>
        </authorList>
    </citation>
    <scope>VARIANTS PFIC10 PHE-158; ARG-266; 341-GLN--VAL-1848 DEL; CYS-401; ASN-535; ASN-583; CYS-824; SER-934; 1016-ARG--VAL-1848 DEL AND HIS-1079</scope>
    <scope>FUNCTION</scope>
    <scope>INVOLVEMENT IN PFIC10</scope>
    <scope>CHARACTERIZATION OF VARIANT PFIC10 ARG-266</scope>
</reference>
<reference key="24">
    <citation type="journal article" date="2020" name="J. Pediatr. Gastroenterol. Nutr.">
        <title>Mutations in myosin 5B in children with early-onset cholestasis.</title>
        <authorList>
            <person name="Cockar I."/>
            <person name="Foskett P."/>
            <person name="Strautnieks S."/>
            <person name="Clinch Y."/>
            <person name="Fustok J."/>
            <person name="Rahman O."/>
            <person name="Sutton H."/>
            <person name="Mtegha M."/>
            <person name="Fessatou S."/>
            <person name="Kontaki E."/>
            <person name="Papaevangelou V."/>
            <person name="Deheragoda M."/>
            <person name="Thompson R.J."/>
            <person name="Grammatikopoulos T."/>
        </authorList>
    </citation>
    <scope>VARIANTS DIAR2 LYS-82 AND 1016-ARG--VAL-1848 DEL</scope>
    <scope>VARIANTS PFIC10 CYS-92; THR-392; THR-488 AND CYS-824</scope>
</reference>
<reference key="25">
    <citation type="journal article" date="2021" name="J. Clin. Med.">
        <title>Congenital diarrhea and cholestatic liver disease: phenotypic spectrum associated with MYO5B mutations.</title>
        <authorList>
            <person name="Aldrian D."/>
            <person name="Vogel G.F."/>
            <person name="Frey T.K."/>
            <person name="Ayyildiz Civan H."/>
            <person name="Aksu A.U."/>
            <person name="Avitzur Y."/>
            <person name="Ramos Boluda E."/>
            <person name="Cakir M."/>
            <person name="Demir A.M."/>
            <person name="Deppisch C."/>
            <person name="Duba H.C."/>
            <person name="Dueker G."/>
            <person name="Gerner P."/>
            <person name="Hertecant J."/>
            <person name="Hornova J."/>
            <person name="Kathemann S."/>
            <person name="Koeglmeier J."/>
            <person name="Koutroumpa A."/>
            <person name="Lanzersdorfer R."/>
            <person name="Lev-Tzion R."/>
            <person name="Lima R."/>
            <person name="Mansour S."/>
            <person name="Meissl M."/>
            <person name="Melek J."/>
            <person name="Miqdady M."/>
            <person name="Montoya J.H."/>
            <person name="Posovszky C."/>
            <person name="Rachman Y."/>
            <person name="Siahanidou T."/>
            <person name="Tabbers M."/>
            <person name="Uhlig H.H."/>
            <person name="Uenal S."/>
            <person name="Wirth S."/>
            <person name="Ruemmele F.M."/>
            <person name="Hess M.W."/>
            <person name="Huber L.A."/>
            <person name="Mueller T."/>
            <person name="Sturm E."/>
            <person name="Janecke A.R."/>
        </authorList>
    </citation>
    <scope>VARIANTS PFIC10 CYS-92; LEU-557 AND 1375-GLN--VAL-1848 DEL</scope>
    <scope>VARIANTS DIAR2 ARG-81; LYS-82; 149-GLN--VAL-1848 DEL; VAL-316; ARG-336; 363-ARG--VAL-1848 DEL; THR-392; ASN-416; GLY-492; PHE-497; 526-GLN--VAL-1848 DEL; 574-GLU--VAL-1848 DEL; PRO-580; CYS-656; 672-LYS--VAL-1848 DEL; MET-686; 749-ARG--VAL-1848 DEL; 1016-ARG--VAL-1848 DEL; 1064-ARG--VAL-1848 DEL; 1172-GLN--VAL-1848 DEL; PRO-1361; 1467-GLN--VAL-1848 DEL; 1600-GLN--VAL-1848 DEL AND 1795-ARG--VAL-1848 DEL</scope>
</reference>
<reference key="26">
    <citation type="journal article" date="2022" name="J. Pediatr. Gastroenterol. Nutr.">
        <title>MYO5B gene mutations: a not negligible cause of intrahepatic cholestasis of infancy with normal gamma-glutamyl transferase phenotype.</title>
        <authorList>
            <person name="Matarazzo L."/>
            <person name="Bianco A.M."/>
            <person name="Athanasakis E."/>
            <person name="Serveres M."/>
            <person name="Francalanci P."/>
            <person name="Cenacchi G."/>
            <person name="Maggiore G."/>
            <person name="D'Adamo A.P."/>
        </authorList>
    </citation>
    <scope>VARIANTS PFIC10 CYS-92; 252-GLN--VAL-1848 DEL; LEU-517; CYS-654 AND CYS-824</scope>
</reference>
<reference key="27">
    <citation type="journal article" date="2022" name="Prenat. Diagn.">
        <title>Two cases of microvillus inclusion disease caused by MYO5B deficiency with prenatal abnormalities.</title>
        <authorList>
            <person name="Lu J."/>
            <person name="Qi Y."/>
            <person name="Ding H."/>
            <person name="Yin A."/>
        </authorList>
    </citation>
    <scope>VARIANTS DIAR2 HIS-219; 536-GLN--VAL-1848 DEL AND 874-TRP--VAL-1848 DEL</scope>
</reference>
<keyword id="KW-0002">3D-structure</keyword>
<keyword id="KW-0007">Acetylation</keyword>
<keyword id="KW-0009">Actin-binding</keyword>
<keyword id="KW-0025">Alternative splicing</keyword>
<keyword id="KW-0067">ATP-binding</keyword>
<keyword id="KW-0112">Calmodulin-binding</keyword>
<keyword id="KW-0175">Coiled coil</keyword>
<keyword id="KW-0963">Cytoplasm</keyword>
<keyword id="KW-0225">Disease variant</keyword>
<keyword id="KW-0988">Intrahepatic cholestasis</keyword>
<keyword id="KW-0505">Motor protein</keyword>
<keyword id="KW-0518">Myosin</keyword>
<keyword id="KW-0547">Nucleotide-binding</keyword>
<keyword id="KW-0597">Phosphoprotein</keyword>
<keyword id="KW-0653">Protein transport</keyword>
<keyword id="KW-1267">Proteomics identification</keyword>
<keyword id="KW-1185">Reference proteome</keyword>
<keyword id="KW-0677">Repeat</keyword>
<keyword id="KW-0813">Transport</keyword>
<proteinExistence type="evidence at protein level"/>
<name>MYO5B_HUMAN</name>
<evidence type="ECO:0000250" key="1">
    <source>
        <dbReference type="UniProtKB" id="P70569"/>
    </source>
</evidence>
<evidence type="ECO:0000255" key="2"/>
<evidence type="ECO:0000255" key="3">
    <source>
        <dbReference type="PROSITE-ProRule" id="PRU00116"/>
    </source>
</evidence>
<evidence type="ECO:0000255" key="4">
    <source>
        <dbReference type="PROSITE-ProRule" id="PRU00503"/>
    </source>
</evidence>
<evidence type="ECO:0000255" key="5">
    <source>
        <dbReference type="PROSITE-ProRule" id="PRU00782"/>
    </source>
</evidence>
<evidence type="ECO:0000255" key="6">
    <source>
        <dbReference type="PROSITE-ProRule" id="PRU01190"/>
    </source>
</evidence>
<evidence type="ECO:0000256" key="7">
    <source>
        <dbReference type="SAM" id="MobiDB-lite"/>
    </source>
</evidence>
<evidence type="ECO:0000269" key="8">
    <source>
    </source>
</evidence>
<evidence type="ECO:0000269" key="9">
    <source>
    </source>
</evidence>
<evidence type="ECO:0000269" key="10">
    <source>
    </source>
</evidence>
<evidence type="ECO:0000269" key="11">
    <source>
    </source>
</evidence>
<evidence type="ECO:0000269" key="12">
    <source>
    </source>
</evidence>
<evidence type="ECO:0000269" key="13">
    <source>
    </source>
</evidence>
<evidence type="ECO:0000269" key="14">
    <source>
    </source>
</evidence>
<evidence type="ECO:0000269" key="15">
    <source>
    </source>
</evidence>
<evidence type="ECO:0000269" key="16">
    <source>
    </source>
</evidence>
<evidence type="ECO:0000269" key="17">
    <source>
    </source>
</evidence>
<evidence type="ECO:0000269" key="18">
    <source>
    </source>
</evidence>
<evidence type="ECO:0000269" key="19">
    <source>
    </source>
</evidence>
<evidence type="ECO:0000269" key="20">
    <source>
    </source>
</evidence>
<evidence type="ECO:0000269" key="21">
    <source>
    </source>
</evidence>
<evidence type="ECO:0000269" key="22">
    <source>
    </source>
</evidence>
<evidence type="ECO:0000269" key="23">
    <source>
    </source>
</evidence>
<evidence type="ECO:0000269" key="24">
    <source>
    </source>
</evidence>
<evidence type="ECO:0000269" key="25">
    <source>
    </source>
</evidence>
<evidence type="ECO:0000269" key="26">
    <source>
    </source>
</evidence>
<evidence type="ECO:0000269" key="27">
    <source ref="4"/>
</evidence>
<evidence type="ECO:0000303" key="28">
    <source>
    </source>
</evidence>
<evidence type="ECO:0000303" key="29">
    <source>
    </source>
</evidence>
<evidence type="ECO:0000305" key="30"/>
<evidence type="ECO:0007744" key="31">
    <source>
    </source>
</evidence>
<evidence type="ECO:0007744" key="32">
    <source>
    </source>
</evidence>
<evidence type="ECO:0007829" key="33">
    <source>
        <dbReference type="PDB" id="4J5M"/>
    </source>
</evidence>
<evidence type="ECO:0007829" key="34">
    <source>
        <dbReference type="PDB" id="4LNZ"/>
    </source>
</evidence>
<evidence type="ECO:0007829" key="35">
    <source>
        <dbReference type="PDB" id="4LX0"/>
    </source>
</evidence>
<gene>
    <name type="primary">MYO5B</name>
    <name type="synonym">KIAA1119</name>
</gene>
<sequence>MSVGELYSQCTRVWIPDPDEVWRSAELTKDYKEGDKSLQLRLEDETILEYPIDVQRNQLPFLRNPDILVGENDLTALSYLHEPAVLHNLKVRFLESNHIYTYCGIVLVAINPYEQLPIYGQDVIYTYSGQNMGDMDPHIFAVAEEAYKQMARDEKNQSIIVSGESGAGKTVSAKYAMRYFATVGGSASETNIEEKVLASSPIMEAIGNAKTTRNDNSSRFGKYIQIGFDKRYHIIGANMRTYLLEKSRVVFQADDERNYHIFYQLCAAAGLPEFKELALTSAEDFFYTSQGGDTSIEGVDDAEDFEKTRQAFTLLGVKESHQMSIFKIIASILHLGSVAIQAERDGDSCSISPQDVYLSNFCRLLGVEHSQMEHWLCHRKLVTTSETYVKTMSLQQVINARNALAKHIYAQLFGWIVEHINKALHTSLKQHSFIGVLDIYGFETFEVNSFEQFCINYANEKLQQQFNSHVFKLEQEEYMKEQIPWTLIDFYDNQPCIDLIEAKLGILDLLDEECKVPKGTDQNWAQKLYDRHSSSQHFQKPRMSNTAFIIVHFADKVEYLSDGFLEKNRDTVYEEQINILKASKFPLVADLFHDDKDPVPATTPGKGSSSKISVRSARPPMKVSNKEHKKTVGHQFRTSLHLLMETLNATTPHYVRCIKPNDEKLPFHFDPKRAVQQLRACGVLETIRISAAGYPSRWAYHDFFNRYRVLVKKRELANTDKKAICRSVLENLIKDPDKFQFGRTKIFFRAGQVAYLEKLRADKFRTATIMIQKTVRGWLQKVKYHRLKGATLTLQRYCRGHLARRLAEHLRRIRAAVVLQKHYRMQRARQAYQRVRRAAVVIQAFTRAMFVRRTYRQVLMEHKATTIQKHVRGWMARRHFQRLRDAAIVIQCAFRMLKARRELKALRIEARSAEHLKRLNVGMENKVVQLQRKIDEQNKEFKTLSEQLSVTTSTYTMEVERLKKELVHYQQSPGEDTSLRLQEEVESLRTELQRAHSERKILEDAHSREKDELRKRVADLEQENALLKDEKEQLNNQILCQSKDEFAQNSVKENLMKKELEEERSRYQNLVKEYSQLEQRYDNLRDEMTIIKQTPGHRRNPSNQSSLESDSNYPSISTSEIGDTEDALQQVEEIGLEKAAMDMTVFLKLQKRVRELEQERKKLQVQLEKREQQDSKKVQAEPPQTDIDLDPNADLAYNSLKRQELESENKKLKNDLNELRKAVADQATQNNSSHGSPDSYSLLLNQLKLAHEELEVRKEEVLILRTQIVSADQRRLAGRNAEPNINARSSWPNSEKHVDQEDAIEAYHGVCQTNSKTEDWGYLNEDGELGLAYQGLKQVARLLEAQLQAQSLEHEEEVEHLKAQLEALKEEMDKQQQTFCQTLLLSPEAQVEFGVQQEISRLTNENLDLKELVEKLEKNERKLKKQLKIYMKKAQDLEAAQALAQSERKRHELNRQVTVQRKEKDFQGMLEYHKEDEALLIRNLVTDLKPQMLSGTVPCLPAYILYMCIRHADYTNDDLKVHSLLTSTINGIKKVLKKHNDDFEMTSFWLSNTCRLLHCLKQYSGDEGFMTQNTAKQNEHCLKNFDLTEYRQVLSDLSIQIYQQLIKIAEGVLQPMIVSAMLENESIQGLSGVKPTGYRKRSSSMADGDNSYCLEAIIRQMNAFHTVMCDQGLDPEIILQVFKQLFYMINAVTLNNLLLRKDVCSWSTGMQLRYNISQLEEWLRGRNLHQSGAVQTMEPLIQAAQLLQLKKKTQEDAEAICSLCTSLSTQQIVKILNLYTPLNEFEERVTVAFIRTIQAQLQERNDPQQLLLDAKHMFPVLFPFNPSSLTMDSIHIPACLNLEFLNEV</sequence>
<organism>
    <name type="scientific">Homo sapiens</name>
    <name type="common">Human</name>
    <dbReference type="NCBI Taxonomy" id="9606"/>
    <lineage>
        <taxon>Eukaryota</taxon>
        <taxon>Metazoa</taxon>
        <taxon>Chordata</taxon>
        <taxon>Craniata</taxon>
        <taxon>Vertebrata</taxon>
        <taxon>Euteleostomi</taxon>
        <taxon>Mammalia</taxon>
        <taxon>Eutheria</taxon>
        <taxon>Euarchontoglires</taxon>
        <taxon>Primates</taxon>
        <taxon>Haplorrhini</taxon>
        <taxon>Catarrhini</taxon>
        <taxon>Hominidae</taxon>
        <taxon>Homo</taxon>
    </lineage>
</organism>
<protein>
    <recommendedName>
        <fullName>Unconventional myosin-Vb</fullName>
    </recommendedName>
</protein>
<accession>Q9ULV0</accession>
<accession>B0I1R3</accession>
<accession>Q0P656</accession>
<accession>Q9H6Y6</accession>